<protein>
    <recommendedName>
        <fullName evidence="1">Large ribosomal subunit protein uL11</fullName>
    </recommendedName>
    <alternativeName>
        <fullName evidence="2">50S ribosomal protein L11</fullName>
    </alternativeName>
</protein>
<reference key="1">
    <citation type="submission" date="2007-05" db="EMBL/GenBank/DDBJ databases">
        <title>Complete sequence of Pseudomonas putida F1.</title>
        <authorList>
            <consortium name="US DOE Joint Genome Institute"/>
            <person name="Copeland A."/>
            <person name="Lucas S."/>
            <person name="Lapidus A."/>
            <person name="Barry K."/>
            <person name="Detter J.C."/>
            <person name="Glavina del Rio T."/>
            <person name="Hammon N."/>
            <person name="Israni S."/>
            <person name="Dalin E."/>
            <person name="Tice H."/>
            <person name="Pitluck S."/>
            <person name="Chain P."/>
            <person name="Malfatti S."/>
            <person name="Shin M."/>
            <person name="Vergez L."/>
            <person name="Schmutz J."/>
            <person name="Larimer F."/>
            <person name="Land M."/>
            <person name="Hauser L."/>
            <person name="Kyrpides N."/>
            <person name="Lykidis A."/>
            <person name="Parales R."/>
            <person name="Richardson P."/>
        </authorList>
    </citation>
    <scope>NUCLEOTIDE SEQUENCE [LARGE SCALE GENOMIC DNA]</scope>
    <source>
        <strain>ATCC 700007 / DSM 6899 / JCM 31910 / BCRC 17059 / LMG 24140 / F1</strain>
    </source>
</reference>
<gene>
    <name evidence="1" type="primary">rplK</name>
    <name type="ordered locus">Pput_0476</name>
</gene>
<proteinExistence type="inferred from homology"/>
<feature type="chain" id="PRO_1000046246" description="Large ribosomal subunit protein uL11">
    <location>
        <begin position="1"/>
        <end position="143"/>
    </location>
</feature>
<dbReference type="EMBL" id="CP000712">
    <property type="protein sequence ID" value="ABQ76646.1"/>
    <property type="molecule type" value="Genomic_DNA"/>
</dbReference>
<dbReference type="SMR" id="A5VXN6"/>
<dbReference type="KEGG" id="ppf:Pput_0476"/>
<dbReference type="eggNOG" id="COG0080">
    <property type="taxonomic scope" value="Bacteria"/>
</dbReference>
<dbReference type="HOGENOM" id="CLU_074237_2_0_6"/>
<dbReference type="GO" id="GO:0022625">
    <property type="term" value="C:cytosolic large ribosomal subunit"/>
    <property type="evidence" value="ECO:0007669"/>
    <property type="project" value="TreeGrafter"/>
</dbReference>
<dbReference type="GO" id="GO:0070180">
    <property type="term" value="F:large ribosomal subunit rRNA binding"/>
    <property type="evidence" value="ECO:0007669"/>
    <property type="project" value="UniProtKB-UniRule"/>
</dbReference>
<dbReference type="GO" id="GO:0003735">
    <property type="term" value="F:structural constituent of ribosome"/>
    <property type="evidence" value="ECO:0007669"/>
    <property type="project" value="InterPro"/>
</dbReference>
<dbReference type="GO" id="GO:0006412">
    <property type="term" value="P:translation"/>
    <property type="evidence" value="ECO:0007669"/>
    <property type="project" value="UniProtKB-UniRule"/>
</dbReference>
<dbReference type="CDD" id="cd00349">
    <property type="entry name" value="Ribosomal_L11"/>
    <property type="match status" value="1"/>
</dbReference>
<dbReference type="FunFam" id="1.10.10.250:FF:000001">
    <property type="entry name" value="50S ribosomal protein L11"/>
    <property type="match status" value="1"/>
</dbReference>
<dbReference type="FunFam" id="3.30.1550.10:FF:000001">
    <property type="entry name" value="50S ribosomal protein L11"/>
    <property type="match status" value="1"/>
</dbReference>
<dbReference type="Gene3D" id="1.10.10.250">
    <property type="entry name" value="Ribosomal protein L11, C-terminal domain"/>
    <property type="match status" value="1"/>
</dbReference>
<dbReference type="Gene3D" id="3.30.1550.10">
    <property type="entry name" value="Ribosomal protein L11/L12, N-terminal domain"/>
    <property type="match status" value="1"/>
</dbReference>
<dbReference type="HAMAP" id="MF_00736">
    <property type="entry name" value="Ribosomal_uL11"/>
    <property type="match status" value="1"/>
</dbReference>
<dbReference type="InterPro" id="IPR000911">
    <property type="entry name" value="Ribosomal_uL11"/>
</dbReference>
<dbReference type="InterPro" id="IPR006519">
    <property type="entry name" value="Ribosomal_uL11_bac-typ"/>
</dbReference>
<dbReference type="InterPro" id="IPR020783">
    <property type="entry name" value="Ribosomal_uL11_C"/>
</dbReference>
<dbReference type="InterPro" id="IPR036769">
    <property type="entry name" value="Ribosomal_uL11_C_sf"/>
</dbReference>
<dbReference type="InterPro" id="IPR020785">
    <property type="entry name" value="Ribosomal_uL11_CS"/>
</dbReference>
<dbReference type="InterPro" id="IPR020784">
    <property type="entry name" value="Ribosomal_uL11_N"/>
</dbReference>
<dbReference type="InterPro" id="IPR036796">
    <property type="entry name" value="Ribosomal_uL11_N_sf"/>
</dbReference>
<dbReference type="NCBIfam" id="TIGR01632">
    <property type="entry name" value="L11_bact"/>
    <property type="match status" value="1"/>
</dbReference>
<dbReference type="PANTHER" id="PTHR11661">
    <property type="entry name" value="60S RIBOSOMAL PROTEIN L12"/>
    <property type="match status" value="1"/>
</dbReference>
<dbReference type="PANTHER" id="PTHR11661:SF1">
    <property type="entry name" value="LARGE RIBOSOMAL SUBUNIT PROTEIN UL11M"/>
    <property type="match status" value="1"/>
</dbReference>
<dbReference type="Pfam" id="PF00298">
    <property type="entry name" value="Ribosomal_L11"/>
    <property type="match status" value="1"/>
</dbReference>
<dbReference type="Pfam" id="PF03946">
    <property type="entry name" value="Ribosomal_L11_N"/>
    <property type="match status" value="1"/>
</dbReference>
<dbReference type="SMART" id="SM00649">
    <property type="entry name" value="RL11"/>
    <property type="match status" value="1"/>
</dbReference>
<dbReference type="SUPFAM" id="SSF54747">
    <property type="entry name" value="Ribosomal L11/L12e N-terminal domain"/>
    <property type="match status" value="1"/>
</dbReference>
<dbReference type="SUPFAM" id="SSF46906">
    <property type="entry name" value="Ribosomal protein L11, C-terminal domain"/>
    <property type="match status" value="1"/>
</dbReference>
<dbReference type="PROSITE" id="PS00359">
    <property type="entry name" value="RIBOSOMAL_L11"/>
    <property type="match status" value="1"/>
</dbReference>
<accession>A5VXN6</accession>
<name>RL11_PSEP1</name>
<comment type="function">
    <text evidence="1">Forms part of the ribosomal stalk which helps the ribosome interact with GTP-bound translation factors.</text>
</comment>
<comment type="subunit">
    <text evidence="1">Part of the ribosomal stalk of the 50S ribosomal subunit. Interacts with L10 and the large rRNA to form the base of the stalk. L10 forms an elongated spine to which L12 dimers bind in a sequential fashion forming a multimeric L10(L12)X complex.</text>
</comment>
<comment type="PTM">
    <text evidence="1">One or more lysine residues are methylated.</text>
</comment>
<comment type="similarity">
    <text evidence="1">Belongs to the universal ribosomal protein uL11 family.</text>
</comment>
<keyword id="KW-0488">Methylation</keyword>
<keyword id="KW-0687">Ribonucleoprotein</keyword>
<keyword id="KW-0689">Ribosomal protein</keyword>
<keyword id="KW-0694">RNA-binding</keyword>
<keyword id="KW-0699">rRNA-binding</keyword>
<organism>
    <name type="scientific">Pseudomonas putida (strain ATCC 700007 / DSM 6899 / JCM 31910 / BCRC 17059 / LMG 24140 / F1)</name>
    <dbReference type="NCBI Taxonomy" id="351746"/>
    <lineage>
        <taxon>Bacteria</taxon>
        <taxon>Pseudomonadati</taxon>
        <taxon>Pseudomonadota</taxon>
        <taxon>Gammaproteobacteria</taxon>
        <taxon>Pseudomonadales</taxon>
        <taxon>Pseudomonadaceae</taxon>
        <taxon>Pseudomonas</taxon>
    </lineage>
</organism>
<sequence>MAKKIQAYIKLQVKAGQANPSPPVGPALGQHGVNIMEFCKAFNARTQGQEAGLPTPVIITVYSDRSFTFETKSTPASVLLKKAAGLTSGSARPNTVKVGTVTRAQLEDIAKAKQADLTAADLDAAVRTIAGSARSMGLNVEGV</sequence>
<evidence type="ECO:0000255" key="1">
    <source>
        <dbReference type="HAMAP-Rule" id="MF_00736"/>
    </source>
</evidence>
<evidence type="ECO:0000305" key="2"/>